<comment type="subcellular location">
    <subcellularLocation>
        <location evidence="3">Cell membrane</location>
        <topology evidence="1">Multi-pass membrane protein</topology>
    </subcellularLocation>
</comment>
<comment type="similarity">
    <text evidence="3">Belongs to the resistance-nodulation-cell division (RND) (TC 2.A.6) family. MmpL subfamily.</text>
</comment>
<comment type="sequence caution" evidence="3">
    <conflict type="erroneous initiation">
        <sequence resource="EMBL-CDS" id="CAC32149"/>
    </conflict>
</comment>
<keyword id="KW-1003">Cell membrane</keyword>
<keyword id="KW-0472">Membrane</keyword>
<keyword id="KW-1185">Reference proteome</keyword>
<keyword id="KW-0812">Transmembrane</keyword>
<keyword id="KW-1133">Transmembrane helix</keyword>
<keyword id="KW-0813">Transport</keyword>
<protein>
    <recommendedName>
        <fullName evidence="3">Probable transport protein MmpL11</fullName>
    </recommendedName>
</protein>
<accession>O06079</accession>
<sequence length="1014" mass="109876">MMRLSSYLRRFRWLVFTGWLLALVPAIYLAMTQSGKLTGGGFEVAGSQSLLVHDQLQEQYPDQGAVSLALVAAPRSDASYQDMNDAVALLRRIVSEFPGVSEVPNPTQLPPRPDRPYGVSLRLDDRNSVTSDVAKQLRTKVGIKGDQAGRTANGKVRLYVIGQGALSAAVAANSKHDIAEAERWNLPIILIVLLAVFGSLAAAAVPLALGVCTVVVTMGLVDLVSMHTIMSVFVTSTVSMFGIALAVDYSLFILMRFREELRSGRQPQEAVDAAMATSGLAVVLSGMTVIASLTGIYLINTAALKSMATGAILAVAIAMLASITLTPAALATFGRAAVKRSVLMHWSQRSECTQSLFWTRWVGWVMHRPWISASAASTILIIMATPVTSMMLGNSLLRQFNSSHEIRAGVAAAAQALGPGALGPVQVLITFPDDPNTQASSPKHRQTIGAIRNRMLQAKNVMSVAPPQFADNNCSALLGAVLSVDPEDLGARETVDWMRTELPKVPGAAHVNVGGPTALINDFDDRVAKTEPLMLVFVALIAFVMLLISIRSVFLAFKGVLMTLLSVAAAYGSLVMVFQWGWLENLGFTHINSIDSTVPPLVLAMTFGLSMDYEIFLLTRIRERFLQTGHTRDAVAYGVSTSARTITSAALIMIAVFVGFAFAGMPLVAEIGVACAVAIAVDVTAVRLVLVPTLMAMFAQWNWWLPRWLSRALPAVDFDKPFPPVDLNEIVVLPADISATKVPCGDLRMVLKLAAKLKNLAPDAICVADPLAFTGCGRNNKRSDRVLPGAATQESEEDPAMGKASDSTAALTAAQVGPVTRTNGHWTARNLVIGLTHRNSITRVMPWSDRPVHPFTLWRSRFSVAIDALEAHIAVQADAPDQPNYQRCSPVETAHVQLPTGDRLLIPTGAETLRLVSYLIMCRNSIRDYAELADMVDAIEPETAAVVLTELDRYYSCQLPMRQWMATQLVRRLSDPHPVDLTEDQWSDPDNKAEWQDVRQRCLSVAVAMLEEAR</sequence>
<feature type="chain" id="PRO_0000103579" description="Probable transport protein MmpL11">
    <location>
        <begin position="1"/>
        <end position="1014"/>
    </location>
</feature>
<feature type="transmembrane region" description="Helical" evidence="1">
    <location>
        <begin position="13"/>
        <end position="33"/>
    </location>
</feature>
<feature type="transmembrane region" description="Helical" evidence="1">
    <location>
        <begin position="156"/>
        <end position="173"/>
    </location>
</feature>
<feature type="transmembrane region" description="Helical" evidence="1">
    <location>
        <begin position="188"/>
        <end position="208"/>
    </location>
</feature>
<feature type="transmembrane region" description="Helical" evidence="1">
    <location>
        <begin position="235"/>
        <end position="255"/>
    </location>
</feature>
<feature type="transmembrane region" description="Helical" evidence="1">
    <location>
        <begin position="279"/>
        <end position="299"/>
    </location>
</feature>
<feature type="transmembrane region" description="Helical" evidence="1">
    <location>
        <begin position="311"/>
        <end position="331"/>
    </location>
</feature>
<feature type="transmembrane region" description="Helical" evidence="1">
    <location>
        <begin position="373"/>
        <end position="393"/>
    </location>
</feature>
<feature type="transmembrane region" description="Helical" evidence="1">
    <location>
        <begin position="530"/>
        <end position="550"/>
    </location>
</feature>
<feature type="transmembrane region" description="Helical" evidence="1">
    <location>
        <begin position="560"/>
        <end position="580"/>
    </location>
</feature>
<feature type="transmembrane region" description="Helical" evidence="1">
    <location>
        <begin position="598"/>
        <end position="618"/>
    </location>
</feature>
<feature type="transmembrane region" description="Helical" evidence="1">
    <location>
        <begin position="649"/>
        <end position="669"/>
    </location>
</feature>
<feature type="transmembrane region" description="Helical" evidence="1">
    <location>
        <begin position="671"/>
        <end position="691"/>
    </location>
</feature>
<feature type="region of interest" description="Disordered" evidence="2">
    <location>
        <begin position="783"/>
        <end position="802"/>
    </location>
</feature>
<name>MMPLB_MYCLE</name>
<evidence type="ECO:0000255" key="1"/>
<evidence type="ECO:0000256" key="2">
    <source>
        <dbReference type="SAM" id="MobiDB-lite"/>
    </source>
</evidence>
<evidence type="ECO:0000305" key="3"/>
<gene>
    <name type="primary">mmpL11</name>
    <name type="ordered locus">ML2617</name>
    <name type="ORF">MLCL622.16c</name>
</gene>
<dbReference type="EMBL" id="Z95398">
    <property type="protein sequence ID" value="CAB08803.1"/>
    <property type="molecule type" value="Genomic_DNA"/>
</dbReference>
<dbReference type="EMBL" id="AL583926">
    <property type="protein sequence ID" value="CAC32149.1"/>
    <property type="status" value="ALT_INIT"/>
    <property type="molecule type" value="Genomic_DNA"/>
</dbReference>
<dbReference type="PIR" id="G87236">
    <property type="entry name" value="G87236"/>
</dbReference>
<dbReference type="RefSeq" id="WP_041323530.1">
    <property type="nucleotide sequence ID" value="NC_002677.1"/>
</dbReference>
<dbReference type="SMR" id="O06079"/>
<dbReference type="STRING" id="272631.gene:17576483"/>
<dbReference type="KEGG" id="mle:ML2617"/>
<dbReference type="Leproma" id="ML2617"/>
<dbReference type="eggNOG" id="COG2409">
    <property type="taxonomic scope" value="Bacteria"/>
</dbReference>
<dbReference type="HOGENOM" id="CLU_005108_2_0_11"/>
<dbReference type="Proteomes" id="UP000000806">
    <property type="component" value="Chromosome"/>
</dbReference>
<dbReference type="GO" id="GO:0005886">
    <property type="term" value="C:plasma membrane"/>
    <property type="evidence" value="ECO:0007669"/>
    <property type="project" value="UniProtKB-SubCell"/>
</dbReference>
<dbReference type="Gene3D" id="1.20.1640.10">
    <property type="entry name" value="Multidrug efflux transporter AcrB transmembrane domain"/>
    <property type="match status" value="2"/>
</dbReference>
<dbReference type="InterPro" id="IPR004869">
    <property type="entry name" value="MMPL_dom"/>
</dbReference>
<dbReference type="InterPro" id="IPR050545">
    <property type="entry name" value="Mycobact_MmpL"/>
</dbReference>
<dbReference type="InterPro" id="IPR000731">
    <property type="entry name" value="SSD"/>
</dbReference>
<dbReference type="PANTHER" id="PTHR33406">
    <property type="entry name" value="MEMBRANE PROTEIN MJ1562-RELATED"/>
    <property type="match status" value="1"/>
</dbReference>
<dbReference type="PANTHER" id="PTHR33406:SF13">
    <property type="entry name" value="MEMBRANE PROTEIN YDFJ"/>
    <property type="match status" value="1"/>
</dbReference>
<dbReference type="Pfam" id="PF03176">
    <property type="entry name" value="MMPL"/>
    <property type="match status" value="2"/>
</dbReference>
<dbReference type="SUPFAM" id="SSF82866">
    <property type="entry name" value="Multidrug efflux transporter AcrB transmembrane domain"/>
    <property type="match status" value="2"/>
</dbReference>
<dbReference type="PROSITE" id="PS50156">
    <property type="entry name" value="SSD"/>
    <property type="match status" value="1"/>
</dbReference>
<reference key="1">
    <citation type="journal article" date="2001" name="Nature">
        <title>Massive gene decay in the leprosy bacillus.</title>
        <authorList>
            <person name="Cole S.T."/>
            <person name="Eiglmeier K."/>
            <person name="Parkhill J."/>
            <person name="James K.D."/>
            <person name="Thomson N.R."/>
            <person name="Wheeler P.R."/>
            <person name="Honore N."/>
            <person name="Garnier T."/>
            <person name="Churcher C.M."/>
            <person name="Harris D.E."/>
            <person name="Mungall K.L."/>
            <person name="Basham D."/>
            <person name="Brown D."/>
            <person name="Chillingworth T."/>
            <person name="Connor R."/>
            <person name="Davies R.M."/>
            <person name="Devlin K."/>
            <person name="Duthoy S."/>
            <person name="Feltwell T."/>
            <person name="Fraser A."/>
            <person name="Hamlin N."/>
            <person name="Holroyd S."/>
            <person name="Hornsby T."/>
            <person name="Jagels K."/>
            <person name="Lacroix C."/>
            <person name="Maclean J."/>
            <person name="Moule S."/>
            <person name="Murphy L.D."/>
            <person name="Oliver K."/>
            <person name="Quail M.A."/>
            <person name="Rajandream M.A."/>
            <person name="Rutherford K.M."/>
            <person name="Rutter S."/>
            <person name="Seeger K."/>
            <person name="Simon S."/>
            <person name="Simmonds M."/>
            <person name="Skelton J."/>
            <person name="Squares R."/>
            <person name="Squares S."/>
            <person name="Stevens K."/>
            <person name="Taylor K."/>
            <person name="Whitehead S."/>
            <person name="Woodward J.R."/>
            <person name="Barrell B.G."/>
        </authorList>
    </citation>
    <scope>NUCLEOTIDE SEQUENCE [LARGE SCALE GENOMIC DNA]</scope>
    <source>
        <strain>TN</strain>
    </source>
</reference>
<proteinExistence type="inferred from homology"/>
<organism>
    <name type="scientific">Mycobacterium leprae (strain TN)</name>
    <dbReference type="NCBI Taxonomy" id="272631"/>
    <lineage>
        <taxon>Bacteria</taxon>
        <taxon>Bacillati</taxon>
        <taxon>Actinomycetota</taxon>
        <taxon>Actinomycetes</taxon>
        <taxon>Mycobacteriales</taxon>
        <taxon>Mycobacteriaceae</taxon>
        <taxon>Mycobacterium</taxon>
    </lineage>
</organism>